<sequence>MSLTNYYSMMGLQTDEPYGAHFIPGGLQGSSVGCAKPVRGSEEEDGTTGSHIPDFSHLSNKQTSLNGFSAWTNTANPTSSSSPQLHSTPSHFQTHHFLSHHHPYYGPQTQTHTEHVASSAASESRFVRSWEGAPAPEVNLSHVSEEFQACVPPQTGLPSPRQTFDDVKPENSPAPHDSPADSSFDRPTEVVLERLGAAEEPKKKPERKKDGEERKTQTNAENPSVSWIHAKSTRKKRCPYTKHQTLELEKEFLYNMYLTRDRRLEVAGLLNLTERQVKIWFQNRRMKMKKLMMRDRRSVNQ</sequence>
<evidence type="ECO:0000250" key="1"/>
<evidence type="ECO:0000255" key="2">
    <source>
        <dbReference type="PROSITE-ProRule" id="PRU00108"/>
    </source>
</evidence>
<evidence type="ECO:0000256" key="3">
    <source>
        <dbReference type="SAM" id="MobiDB-lite"/>
    </source>
</evidence>
<evidence type="ECO:0000305" key="4"/>
<accession>Q1KKR7</accession>
<feature type="chain" id="PRO_0000265998" description="Homeobox protein Hox-D9b">
    <location>
        <begin position="1"/>
        <end position="301"/>
    </location>
</feature>
<feature type="DNA-binding region" description="Homeobox" evidence="2">
    <location>
        <begin position="233"/>
        <end position="292"/>
    </location>
</feature>
<feature type="region of interest" description="Disordered" evidence="3">
    <location>
        <begin position="33"/>
        <end position="120"/>
    </location>
</feature>
<feature type="region of interest" description="Disordered" evidence="3">
    <location>
        <begin position="150"/>
        <end position="226"/>
    </location>
</feature>
<feature type="compositionally biased region" description="Polar residues" evidence="3">
    <location>
        <begin position="57"/>
        <end position="67"/>
    </location>
</feature>
<feature type="compositionally biased region" description="Low complexity" evidence="3">
    <location>
        <begin position="69"/>
        <end position="92"/>
    </location>
</feature>
<feature type="compositionally biased region" description="Basic residues" evidence="3">
    <location>
        <begin position="93"/>
        <end position="103"/>
    </location>
</feature>
<feature type="compositionally biased region" description="Low complexity" evidence="3">
    <location>
        <begin position="173"/>
        <end position="182"/>
    </location>
</feature>
<feature type="compositionally biased region" description="Basic and acidic residues" evidence="3">
    <location>
        <begin position="183"/>
        <end position="216"/>
    </location>
</feature>
<proteinExistence type="inferred from homology"/>
<reference key="1">
    <citation type="journal article" date="2006" name="Proc. Natl. Acad. Sci. U.S.A.">
        <title>Highly conserved syntenic blocks at the vertebrate Hox loci and conserved regulatory elements within and outside Hox gene clusters.</title>
        <authorList>
            <person name="Lee A.P."/>
            <person name="Koh E.G.L."/>
            <person name="Tay A."/>
            <person name="Brenner S."/>
            <person name="Venkatesh B."/>
        </authorList>
    </citation>
    <scope>NUCLEOTIDE SEQUENCE [GENOMIC DNA]</scope>
</reference>
<gene>
    <name type="primary">hoxd9b</name>
</gene>
<dbReference type="EMBL" id="DQ481669">
    <property type="protein sequence ID" value="ABF22477.1"/>
    <property type="molecule type" value="Genomic_DNA"/>
</dbReference>
<dbReference type="SMR" id="Q1KKR7"/>
<dbReference type="STRING" id="31033.ENSTRUP00000069664"/>
<dbReference type="eggNOG" id="KOG0487">
    <property type="taxonomic scope" value="Eukaryota"/>
</dbReference>
<dbReference type="InParanoid" id="Q1KKR7"/>
<dbReference type="Proteomes" id="UP000005226">
    <property type="component" value="Unplaced"/>
</dbReference>
<dbReference type="GO" id="GO:0005634">
    <property type="term" value="C:nucleus"/>
    <property type="evidence" value="ECO:0007669"/>
    <property type="project" value="UniProtKB-SubCell"/>
</dbReference>
<dbReference type="GO" id="GO:0000981">
    <property type="term" value="F:DNA-binding transcription factor activity, RNA polymerase II-specific"/>
    <property type="evidence" value="ECO:0007669"/>
    <property type="project" value="InterPro"/>
</dbReference>
<dbReference type="GO" id="GO:0000978">
    <property type="term" value="F:RNA polymerase II cis-regulatory region sequence-specific DNA binding"/>
    <property type="evidence" value="ECO:0007669"/>
    <property type="project" value="TreeGrafter"/>
</dbReference>
<dbReference type="GO" id="GO:0009952">
    <property type="term" value="P:anterior/posterior pattern specification"/>
    <property type="evidence" value="ECO:0007669"/>
    <property type="project" value="TreeGrafter"/>
</dbReference>
<dbReference type="GO" id="GO:0048704">
    <property type="term" value="P:embryonic skeletal system morphogenesis"/>
    <property type="evidence" value="ECO:0007669"/>
    <property type="project" value="TreeGrafter"/>
</dbReference>
<dbReference type="GO" id="GO:0009954">
    <property type="term" value="P:proximal/distal pattern formation"/>
    <property type="evidence" value="ECO:0007669"/>
    <property type="project" value="TreeGrafter"/>
</dbReference>
<dbReference type="CDD" id="cd00086">
    <property type="entry name" value="homeodomain"/>
    <property type="match status" value="1"/>
</dbReference>
<dbReference type="Gene3D" id="1.10.10.60">
    <property type="entry name" value="Homeodomain-like"/>
    <property type="match status" value="1"/>
</dbReference>
<dbReference type="InterPro" id="IPR050803">
    <property type="entry name" value="Abd-B_homeobox_TF"/>
</dbReference>
<dbReference type="InterPro" id="IPR001356">
    <property type="entry name" value="HD"/>
</dbReference>
<dbReference type="InterPro" id="IPR020479">
    <property type="entry name" value="HD_metazoa"/>
</dbReference>
<dbReference type="InterPro" id="IPR017970">
    <property type="entry name" value="Homeobox_CS"/>
</dbReference>
<dbReference type="InterPro" id="IPR009057">
    <property type="entry name" value="Homeodomain-like_sf"/>
</dbReference>
<dbReference type="InterPro" id="IPR017112">
    <property type="entry name" value="HXA9/HXB9/HXC9"/>
</dbReference>
<dbReference type="PANTHER" id="PTHR45970">
    <property type="entry name" value="AGAP004664-PA"/>
    <property type="match status" value="1"/>
</dbReference>
<dbReference type="PANTHER" id="PTHR45970:SF3">
    <property type="entry name" value="HOMEOBOX PROTEIN HOX-A9"/>
    <property type="match status" value="1"/>
</dbReference>
<dbReference type="Pfam" id="PF00046">
    <property type="entry name" value="Homeodomain"/>
    <property type="match status" value="1"/>
</dbReference>
<dbReference type="PIRSF" id="PIRSF037109">
    <property type="entry name" value="Homeobox_Hox9"/>
    <property type="match status" value="1"/>
</dbReference>
<dbReference type="PRINTS" id="PR00024">
    <property type="entry name" value="HOMEOBOX"/>
</dbReference>
<dbReference type="SMART" id="SM00389">
    <property type="entry name" value="HOX"/>
    <property type="match status" value="1"/>
</dbReference>
<dbReference type="SUPFAM" id="SSF46689">
    <property type="entry name" value="Homeodomain-like"/>
    <property type="match status" value="1"/>
</dbReference>
<dbReference type="PROSITE" id="PS00027">
    <property type="entry name" value="HOMEOBOX_1"/>
    <property type="match status" value="1"/>
</dbReference>
<dbReference type="PROSITE" id="PS50071">
    <property type="entry name" value="HOMEOBOX_2"/>
    <property type="match status" value="1"/>
</dbReference>
<keyword id="KW-0217">Developmental protein</keyword>
<keyword id="KW-0238">DNA-binding</keyword>
<keyword id="KW-0371">Homeobox</keyword>
<keyword id="KW-0539">Nucleus</keyword>
<keyword id="KW-1185">Reference proteome</keyword>
<keyword id="KW-0804">Transcription</keyword>
<keyword id="KW-0805">Transcription regulation</keyword>
<protein>
    <recommendedName>
        <fullName>Homeobox protein Hox-D9b</fullName>
    </recommendedName>
</protein>
<comment type="function">
    <text evidence="1">Sequence-specific transcription factor which is part of a developmental regulatory system that provides cells with specific positional identities on the anterior-posterior axis.</text>
</comment>
<comment type="subcellular location">
    <subcellularLocation>
        <location evidence="2">Nucleus</location>
    </subcellularLocation>
</comment>
<comment type="similarity">
    <text evidence="4">Belongs to the Abd-B homeobox family.</text>
</comment>
<name>HXD9B_TAKRU</name>
<organism>
    <name type="scientific">Takifugu rubripes</name>
    <name type="common">Japanese pufferfish</name>
    <name type="synonym">Fugu rubripes</name>
    <dbReference type="NCBI Taxonomy" id="31033"/>
    <lineage>
        <taxon>Eukaryota</taxon>
        <taxon>Metazoa</taxon>
        <taxon>Chordata</taxon>
        <taxon>Craniata</taxon>
        <taxon>Vertebrata</taxon>
        <taxon>Euteleostomi</taxon>
        <taxon>Actinopterygii</taxon>
        <taxon>Neopterygii</taxon>
        <taxon>Teleostei</taxon>
        <taxon>Neoteleostei</taxon>
        <taxon>Acanthomorphata</taxon>
        <taxon>Eupercaria</taxon>
        <taxon>Tetraodontiformes</taxon>
        <taxon>Tetradontoidea</taxon>
        <taxon>Tetraodontidae</taxon>
        <taxon>Takifugu</taxon>
    </lineage>
</organism>